<proteinExistence type="evidence at transcript level"/>
<dbReference type="EC" id="1.-.-.-"/>
<dbReference type="EMBL" id="EU961931">
    <property type="protein sequence ID" value="ACG34049.1"/>
    <property type="molecule type" value="mRNA"/>
</dbReference>
<dbReference type="EMBL" id="BT083725">
    <property type="protein sequence ID" value="ACR34078.1"/>
    <property type="molecule type" value="mRNA"/>
</dbReference>
<dbReference type="RefSeq" id="NP_001170569.1">
    <property type="nucleotide sequence ID" value="NM_001177098.1"/>
</dbReference>
<dbReference type="SMR" id="C4IYS8"/>
<dbReference type="FunCoup" id="C4IYS8">
    <property type="interactions" value="851"/>
</dbReference>
<dbReference type="STRING" id="4577.C4IYS8"/>
<dbReference type="PaxDb" id="4577-GRMZM2G066885_P01"/>
<dbReference type="EnsemblPlants" id="Zm00001eb248610_T001">
    <property type="protein sequence ID" value="Zm00001eb248610_P001"/>
    <property type="gene ID" value="Zm00001eb248610"/>
</dbReference>
<dbReference type="GeneID" id="100384594"/>
<dbReference type="Gramene" id="Zm00001eb248610_T001">
    <property type="protein sequence ID" value="Zm00001eb248610_P001"/>
    <property type="gene ID" value="Zm00001eb248610"/>
</dbReference>
<dbReference type="KEGG" id="zma:100384594"/>
<dbReference type="eggNOG" id="KOG1619">
    <property type="taxonomic scope" value="Eukaryota"/>
</dbReference>
<dbReference type="HOGENOM" id="CLU_069712_0_1_1"/>
<dbReference type="InParanoid" id="C4IYS8"/>
<dbReference type="OMA" id="GAGDCEY"/>
<dbReference type="OrthoDB" id="907479at2759"/>
<dbReference type="Proteomes" id="UP000007305">
    <property type="component" value="Chromosome 5"/>
</dbReference>
<dbReference type="ExpressionAtlas" id="C4IYS8">
    <property type="expression patterns" value="baseline and differential"/>
</dbReference>
<dbReference type="GO" id="GO:0016020">
    <property type="term" value="C:membrane"/>
    <property type="evidence" value="ECO:0007669"/>
    <property type="project" value="UniProtKB-SubCell"/>
</dbReference>
<dbReference type="GO" id="GO:0046872">
    <property type="term" value="F:metal ion binding"/>
    <property type="evidence" value="ECO:0007669"/>
    <property type="project" value="UniProtKB-KW"/>
</dbReference>
<dbReference type="GO" id="GO:0016491">
    <property type="term" value="F:oxidoreductase activity"/>
    <property type="evidence" value="ECO:0000318"/>
    <property type="project" value="GO_Central"/>
</dbReference>
<dbReference type="CDD" id="cd08766">
    <property type="entry name" value="Cyt_b561_ACYB-1_like"/>
    <property type="match status" value="1"/>
</dbReference>
<dbReference type="FunFam" id="1.20.120.1770:FF:000001">
    <property type="entry name" value="Cytochrome b reductase 1"/>
    <property type="match status" value="1"/>
</dbReference>
<dbReference type="Gene3D" id="1.20.120.1770">
    <property type="match status" value="1"/>
</dbReference>
<dbReference type="InterPro" id="IPR043205">
    <property type="entry name" value="CYB561/CYBRD1-like"/>
</dbReference>
<dbReference type="InterPro" id="IPR006593">
    <property type="entry name" value="Cyt_b561/ferric_Rdtase_TM"/>
</dbReference>
<dbReference type="PANTHER" id="PTHR10106">
    <property type="entry name" value="CYTOCHROME B561-RELATED"/>
    <property type="match status" value="1"/>
</dbReference>
<dbReference type="PANTHER" id="PTHR10106:SF22">
    <property type="entry name" value="TRANSMEMBRANE ASCORBATE FERRIREDUCTASE 1"/>
    <property type="match status" value="1"/>
</dbReference>
<dbReference type="Pfam" id="PF03188">
    <property type="entry name" value="Cytochrom_B561"/>
    <property type="match status" value="1"/>
</dbReference>
<dbReference type="SMART" id="SM00665">
    <property type="entry name" value="B561"/>
    <property type="match status" value="1"/>
</dbReference>
<dbReference type="PROSITE" id="PS50939">
    <property type="entry name" value="CYTOCHROME_B561"/>
    <property type="match status" value="1"/>
</dbReference>
<name>ACFR2_MAIZE</name>
<keyword id="KW-0249">Electron transport</keyword>
<keyword id="KW-0349">Heme</keyword>
<keyword id="KW-0408">Iron</keyword>
<keyword id="KW-0472">Membrane</keyword>
<keyword id="KW-0479">Metal-binding</keyword>
<keyword id="KW-0560">Oxidoreductase</keyword>
<keyword id="KW-1185">Reference proteome</keyword>
<keyword id="KW-0812">Transmembrane</keyword>
<keyword id="KW-1133">Transmembrane helix</keyword>
<keyword id="KW-0813">Transport</keyword>
<protein>
    <recommendedName>
        <fullName>Ascorbate-specific transmembrane electron transporter 2</fullName>
        <ecNumber>1.-.-.-</ecNumber>
    </recommendedName>
    <alternativeName>
        <fullName>Cytochrome b561-2</fullName>
    </alternativeName>
</protein>
<reference key="1">
    <citation type="journal article" date="2009" name="Plant Mol. Biol.">
        <title>Insights into corn genes derived from large-scale cDNA sequencing.</title>
        <authorList>
            <person name="Alexandrov N.N."/>
            <person name="Brover V.V."/>
            <person name="Freidin S."/>
            <person name="Troukhan M.E."/>
            <person name="Tatarinova T.V."/>
            <person name="Zhang H."/>
            <person name="Swaller T.J."/>
            <person name="Lu Y.-P."/>
            <person name="Bouck J."/>
            <person name="Flavell R.B."/>
            <person name="Feldmann K.A."/>
        </authorList>
    </citation>
    <scope>NUCLEOTIDE SEQUENCE [LARGE SCALE MRNA]</scope>
</reference>
<reference key="2">
    <citation type="submission" date="2009-05" db="EMBL/GenBank/DDBJ databases">
        <title>Maize full-length cDNA project.</title>
        <authorList>
            <person name="Yu Y."/>
            <person name="Currie J."/>
            <person name="Lomeli R."/>
            <person name="Angelova A."/>
            <person name="Collura K."/>
            <person name="Wissotski M."/>
            <person name="Campos D."/>
            <person name="Kudrna D."/>
            <person name="Golser W."/>
            <person name="Ashely E."/>
            <person name="Descour A."/>
            <person name="Fernandes J."/>
            <person name="Soderlund C."/>
            <person name="Walbot V."/>
        </authorList>
    </citation>
    <scope>NUCLEOTIDE SEQUENCE [LARGE SCALE MRNA]</scope>
    <source>
        <strain>cv. B73</strain>
    </source>
</reference>
<accession>C4IYS8</accession>
<accession>B6TAB6</accession>
<organism>
    <name type="scientific">Zea mays</name>
    <name type="common">Maize</name>
    <dbReference type="NCBI Taxonomy" id="4577"/>
    <lineage>
        <taxon>Eukaryota</taxon>
        <taxon>Viridiplantae</taxon>
        <taxon>Streptophyta</taxon>
        <taxon>Embryophyta</taxon>
        <taxon>Tracheophyta</taxon>
        <taxon>Spermatophyta</taxon>
        <taxon>Magnoliopsida</taxon>
        <taxon>Liliopsida</taxon>
        <taxon>Poales</taxon>
        <taxon>Poaceae</taxon>
        <taxon>PACMAD clade</taxon>
        <taxon>Panicoideae</taxon>
        <taxon>Andropogonodae</taxon>
        <taxon>Andropogoneae</taxon>
        <taxon>Tripsacinae</taxon>
        <taxon>Zea</taxon>
    </lineage>
</organism>
<evidence type="ECO:0000250" key="1"/>
<evidence type="ECO:0000250" key="2">
    <source>
        <dbReference type="UniProtKB" id="Q9SWS1"/>
    </source>
</evidence>
<evidence type="ECO:0000255" key="3"/>
<evidence type="ECO:0000255" key="4">
    <source>
        <dbReference type="PROSITE-ProRule" id="PRU00242"/>
    </source>
</evidence>
<evidence type="ECO:0000305" key="5"/>
<comment type="function">
    <text evidence="1">Two-heme-containing cytochrome. Catalyzes ascorbate-dependent trans-membrane electron transfer by utilizing a concerted H(+)/e(-) transfer mechanism (By similarity).</text>
</comment>
<comment type="cofactor">
    <cofactor evidence="2">
        <name>heme b</name>
        <dbReference type="ChEBI" id="CHEBI:60344"/>
    </cofactor>
    <text evidence="2">Binds 2 heme b groups non-covalently.</text>
</comment>
<comment type="subcellular location">
    <subcellularLocation>
        <location evidence="5">Membrane</location>
        <topology evidence="5">Multi-pass membrane protein</topology>
    </subcellularLocation>
</comment>
<feature type="chain" id="PRO_0000416688" description="Ascorbate-specific transmembrane electron transporter 2">
    <location>
        <begin position="1"/>
        <end position="236"/>
    </location>
</feature>
<feature type="topological domain" description="Cytoplasmic" evidence="3">
    <location>
        <begin position="1"/>
        <end position="13"/>
    </location>
</feature>
<feature type="transmembrane region" description="Helical" evidence="3">
    <location>
        <begin position="14"/>
        <end position="34"/>
    </location>
</feature>
<feature type="topological domain" description="Extracellular" evidence="3">
    <location>
        <begin position="35"/>
        <end position="50"/>
    </location>
</feature>
<feature type="transmembrane region" description="Helical" evidence="3">
    <location>
        <begin position="51"/>
        <end position="71"/>
    </location>
</feature>
<feature type="topological domain" description="Cytoplasmic" evidence="3">
    <location>
        <begin position="72"/>
        <end position="84"/>
    </location>
</feature>
<feature type="transmembrane region" description="Helical" evidence="3">
    <location>
        <begin position="85"/>
        <end position="105"/>
    </location>
</feature>
<feature type="topological domain" description="Extracellular" evidence="3">
    <location>
        <begin position="106"/>
        <end position="122"/>
    </location>
</feature>
<feature type="transmembrane region" description="Helical" evidence="3">
    <location>
        <begin position="123"/>
        <end position="143"/>
    </location>
</feature>
<feature type="topological domain" description="Cytoplasmic" evidence="3">
    <location>
        <begin position="144"/>
        <end position="153"/>
    </location>
</feature>
<feature type="transmembrane region" description="Helical" evidence="3">
    <location>
        <begin position="154"/>
        <end position="174"/>
    </location>
</feature>
<feature type="topological domain" description="Extracellular" evidence="3">
    <location>
        <begin position="175"/>
        <end position="201"/>
    </location>
</feature>
<feature type="transmembrane region" description="Helical" evidence="3">
    <location>
        <begin position="202"/>
        <end position="222"/>
    </location>
</feature>
<feature type="topological domain" description="Cytoplasmic" evidence="3">
    <location>
        <begin position="223"/>
        <end position="236"/>
    </location>
</feature>
<feature type="domain" description="Cytochrome b561" evidence="4">
    <location>
        <begin position="15"/>
        <end position="219"/>
    </location>
</feature>
<feature type="binding site" description="axial binding residue" evidence="2">
    <location>
        <position position="52"/>
    </location>
    <ligand>
        <name>heme b</name>
        <dbReference type="ChEBI" id="CHEBI:60344"/>
        <label>1</label>
    </ligand>
    <ligandPart>
        <name>Fe</name>
        <dbReference type="ChEBI" id="CHEBI:18248"/>
    </ligandPart>
</feature>
<feature type="binding site" evidence="1">
    <location>
        <begin position="67"/>
        <end position="75"/>
    </location>
    <ligand>
        <name>L-ascorbate</name>
        <dbReference type="ChEBI" id="CHEBI:38290"/>
    </ligand>
</feature>
<feature type="binding site" description="axial binding residue" evidence="2">
    <location>
        <position position="86"/>
    </location>
    <ligand>
        <name>heme b</name>
        <dbReference type="ChEBI" id="CHEBI:60344"/>
        <label>2</label>
    </ligand>
    <ligandPart>
        <name>Fe</name>
        <dbReference type="ChEBI" id="CHEBI:18248"/>
    </ligandPart>
</feature>
<feature type="binding site" evidence="1">
    <location>
        <begin position="116"/>
        <end position="125"/>
    </location>
    <ligand>
        <name>monodehydro-L-ascorbate radical</name>
        <dbReference type="ChEBI" id="CHEBI:59513"/>
    </ligand>
</feature>
<feature type="binding site" description="axial binding residue" evidence="2">
    <location>
        <position position="120"/>
    </location>
    <ligand>
        <name>heme b</name>
        <dbReference type="ChEBI" id="CHEBI:60344"/>
        <label>1</label>
    </ligand>
    <ligandPart>
        <name>Fe</name>
        <dbReference type="ChEBI" id="CHEBI:18248"/>
    </ligandPart>
</feature>
<feature type="binding site" description="axial binding residue" evidence="2">
    <location>
        <position position="159"/>
    </location>
    <ligand>
        <name>heme b</name>
        <dbReference type="ChEBI" id="CHEBI:60344"/>
        <label>2</label>
    </ligand>
    <ligandPart>
        <name>Fe</name>
        <dbReference type="ChEBI" id="CHEBI:18248"/>
    </ligandPart>
</feature>
<feature type="sequence conflict" description="In Ref. 1; ACG34049." evidence="5" ref="1">
    <original>E</original>
    <variation>G</variation>
    <location>
        <position position="80"/>
    </location>
</feature>
<sequence>MGLGLGVRAAPFTYAAHALAVAAAAMVLVWAIYFRGGLAIEATNKNLIFNVHPVLMLIGYIIIGGEAIMVYRVLPTSNHETNKLIHLVLHGIALVLGAVGIYFAFKNHNESGIANLYSLHSWIGIGTITLYGIQWIVGFVTFFFPGAAPNVKKGVLPWHILFGLFVYILALANAELGFLEKLTFLESSGLDKYGTEAFLVNFTALVVVLFGASVVVAAIAPVRLEEPQGYVPIPEN</sequence>